<name>MSHD_BRAFD</name>
<accession>C7MGB3</accession>
<reference key="1">
    <citation type="journal article" date="2009" name="Stand. Genomic Sci.">
        <title>Complete genome sequence of Brachybacterium faecium type strain (Schefferle 6-10).</title>
        <authorList>
            <person name="Lapidus A."/>
            <person name="Pukall R."/>
            <person name="Labuttii K."/>
            <person name="Copeland A."/>
            <person name="Del Rio T.G."/>
            <person name="Nolan M."/>
            <person name="Chen F."/>
            <person name="Lucas S."/>
            <person name="Tice H."/>
            <person name="Cheng J.F."/>
            <person name="Bruce D."/>
            <person name="Goodwin L."/>
            <person name="Pitluck S."/>
            <person name="Rohde M."/>
            <person name="Goker M."/>
            <person name="Pati A."/>
            <person name="Ivanova N."/>
            <person name="Mavrommatis K."/>
            <person name="Chen A."/>
            <person name="Palaniappan K."/>
            <person name="D'haeseleer P."/>
            <person name="Chain P."/>
            <person name="Bristow J."/>
            <person name="Eisen J.A."/>
            <person name="Markowitz V."/>
            <person name="Hugenholtz P."/>
            <person name="Kyrpides N.C."/>
            <person name="Klenk H.P."/>
        </authorList>
    </citation>
    <scope>NUCLEOTIDE SEQUENCE [LARGE SCALE GENOMIC DNA]</scope>
    <source>
        <strain>ATCC 43885 / DSM 4810 / JCM 11609 / LMG 19847 / NBRC 14762 / NCIMB 9860 / 6-10</strain>
    </source>
</reference>
<organism>
    <name type="scientific">Brachybacterium faecium (strain ATCC 43885 / DSM 4810 / JCM 11609 / LMG 19847 / NBRC 14762 / NCIMB 9860 / 6-10)</name>
    <dbReference type="NCBI Taxonomy" id="446465"/>
    <lineage>
        <taxon>Bacteria</taxon>
        <taxon>Bacillati</taxon>
        <taxon>Actinomycetota</taxon>
        <taxon>Actinomycetes</taxon>
        <taxon>Micrococcales</taxon>
        <taxon>Dermabacteraceae</taxon>
        <taxon>Brachybacterium</taxon>
    </lineage>
</organism>
<keyword id="KW-0012">Acyltransferase</keyword>
<keyword id="KW-1185">Reference proteome</keyword>
<keyword id="KW-0677">Repeat</keyword>
<keyword id="KW-0808">Transferase</keyword>
<gene>
    <name evidence="1" type="primary">mshD</name>
    <name type="ordered locus">Bfae_25650</name>
</gene>
<evidence type="ECO:0000255" key="1">
    <source>
        <dbReference type="HAMAP-Rule" id="MF_01698"/>
    </source>
</evidence>
<evidence type="ECO:0000256" key="2">
    <source>
        <dbReference type="SAM" id="MobiDB-lite"/>
    </source>
</evidence>
<comment type="function">
    <text evidence="1">Catalyzes the transfer of acetyl from acetyl-CoA to desacetylmycothiol (Cys-GlcN-Ins) to form mycothiol.</text>
</comment>
<comment type="catalytic activity">
    <reaction evidence="1">
        <text>1D-myo-inositol 2-(L-cysteinylamino)-2-deoxy-alpha-D-glucopyranoside + acetyl-CoA = mycothiol + CoA + H(+)</text>
        <dbReference type="Rhea" id="RHEA:26172"/>
        <dbReference type="ChEBI" id="CHEBI:15378"/>
        <dbReference type="ChEBI" id="CHEBI:16768"/>
        <dbReference type="ChEBI" id="CHEBI:57287"/>
        <dbReference type="ChEBI" id="CHEBI:57288"/>
        <dbReference type="ChEBI" id="CHEBI:58887"/>
        <dbReference type="EC" id="2.3.1.189"/>
    </reaction>
</comment>
<comment type="subunit">
    <text evidence="1">Monomer.</text>
</comment>
<comment type="similarity">
    <text evidence="1">Belongs to the acetyltransferase family. MshD subfamily.</text>
</comment>
<protein>
    <recommendedName>
        <fullName evidence="1">Mycothiol acetyltransferase</fullName>
        <shortName evidence="1">MSH acetyltransferase</shortName>
        <ecNumber evidence="1">2.3.1.189</ecNumber>
    </recommendedName>
    <alternativeName>
        <fullName evidence="1">Mycothiol synthase</fullName>
    </alternativeName>
</protein>
<proteinExistence type="inferred from homology"/>
<sequence>MITTTALVPARRSAVRTLLATVTEHDGVSPLDEAALLALDGEDARHLLLTADGAATDTHAAEATAGSAASADPADPADPAAPADPADPADETLLGYVSVLGDGTVQGMVDPAHRRRGHGSALLRAALALRPDAGVWVHGALEGSLAFLTDAGLTETRRLLTLRRDLGGAQPLPSAPAPTLEGLRLDTFEESRDAEAWVAVNVRAFADHPEQGALTRADLEQRLAQPWFDAEDMLVALRDETLVGFVWIKREQPGATDRDAEIYVVATDPSVQGHRVAGHLMATVLERLERDGVPGVELYVEADNAPALRLYENWGFEVSGRDVQLRATERG</sequence>
<feature type="chain" id="PRO_0000400242" description="Mycothiol acetyltransferase">
    <location>
        <begin position="1"/>
        <end position="331"/>
    </location>
</feature>
<feature type="domain" description="N-acetyltransferase" evidence="1">
    <location>
        <begin position="183"/>
        <end position="331"/>
    </location>
</feature>
<feature type="region of interest" description="Disordered" evidence="2">
    <location>
        <begin position="59"/>
        <end position="89"/>
    </location>
</feature>
<feature type="compositionally biased region" description="Low complexity" evidence="2">
    <location>
        <begin position="59"/>
        <end position="86"/>
    </location>
</feature>
<feature type="binding site" evidence="1">
    <location>
        <position position="33"/>
    </location>
    <ligand>
        <name>1D-myo-inositol 2-(L-cysteinylamino)-2-deoxy-alpha-D-glucopyranoside</name>
        <dbReference type="ChEBI" id="CHEBI:58887"/>
    </ligand>
</feature>
<feature type="binding site" evidence="1">
    <location>
        <begin position="115"/>
        <end position="120"/>
    </location>
    <ligand>
        <name>acetyl-CoA</name>
        <dbReference type="ChEBI" id="CHEBI:57288"/>
        <label>1</label>
    </ligand>
</feature>
<feature type="binding site" evidence="1">
    <location>
        <position position="210"/>
    </location>
    <ligand>
        <name>1D-myo-inositol 2-(L-cysteinylamino)-2-deoxy-alpha-D-glucopyranoside</name>
        <dbReference type="ChEBI" id="CHEBI:58887"/>
    </ligand>
</feature>
<feature type="binding site" evidence="1">
    <location>
        <position position="249"/>
    </location>
    <ligand>
        <name>1D-myo-inositol 2-(L-cysteinylamino)-2-deoxy-alpha-D-glucopyranoside</name>
        <dbReference type="ChEBI" id="CHEBI:58887"/>
    </ligand>
</feature>
<feature type="binding site" evidence="1">
    <location>
        <position position="261"/>
    </location>
    <ligand>
        <name>1D-myo-inositol 2-(L-cysteinylamino)-2-deoxy-alpha-D-glucopyranoside</name>
        <dbReference type="ChEBI" id="CHEBI:58887"/>
    </ligand>
</feature>
<feature type="binding site" evidence="1">
    <location>
        <begin position="265"/>
        <end position="267"/>
    </location>
    <ligand>
        <name>acetyl-CoA</name>
        <dbReference type="ChEBI" id="CHEBI:57288"/>
        <label>2</label>
    </ligand>
</feature>
<feature type="binding site" evidence="1">
    <location>
        <position position="299"/>
    </location>
    <ligand>
        <name>1D-myo-inositol 2-(L-cysteinylamino)-2-deoxy-alpha-D-glucopyranoside</name>
        <dbReference type="ChEBI" id="CHEBI:58887"/>
    </ligand>
</feature>
<feature type="binding site" evidence="1">
    <location>
        <begin position="304"/>
        <end position="309"/>
    </location>
    <ligand>
        <name>acetyl-CoA</name>
        <dbReference type="ChEBI" id="CHEBI:57288"/>
        <label>2</label>
    </ligand>
</feature>
<dbReference type="EC" id="2.3.1.189" evidence="1"/>
<dbReference type="EMBL" id="CP001643">
    <property type="protein sequence ID" value="ACU86346.1"/>
    <property type="molecule type" value="Genomic_DNA"/>
</dbReference>
<dbReference type="RefSeq" id="YP_003155936.1">
    <property type="nucleotide sequence ID" value="NC_013172.1"/>
</dbReference>
<dbReference type="SMR" id="C7MGB3"/>
<dbReference type="STRING" id="446465.Bfae_25650"/>
<dbReference type="KEGG" id="bfa:Bfae_25650"/>
<dbReference type="PATRIC" id="fig|446465.5.peg.2539"/>
<dbReference type="eggNOG" id="COG0456">
    <property type="taxonomic scope" value="Bacteria"/>
</dbReference>
<dbReference type="HOGENOM" id="CLU_068014_0_0_11"/>
<dbReference type="OrthoDB" id="9761456at2"/>
<dbReference type="Proteomes" id="UP000001919">
    <property type="component" value="Chromosome"/>
</dbReference>
<dbReference type="GO" id="GO:0035447">
    <property type="term" value="F:mycothiol synthase activity"/>
    <property type="evidence" value="ECO:0007669"/>
    <property type="project" value="UniProtKB-UniRule"/>
</dbReference>
<dbReference type="GO" id="GO:0008999">
    <property type="term" value="F:protein-N-terminal-alanine acetyltransferase activity"/>
    <property type="evidence" value="ECO:0007669"/>
    <property type="project" value="TreeGrafter"/>
</dbReference>
<dbReference type="GO" id="GO:0010125">
    <property type="term" value="P:mycothiol biosynthetic process"/>
    <property type="evidence" value="ECO:0007669"/>
    <property type="project" value="UniProtKB-UniRule"/>
</dbReference>
<dbReference type="CDD" id="cd04301">
    <property type="entry name" value="NAT_SF"/>
    <property type="match status" value="1"/>
</dbReference>
<dbReference type="Gene3D" id="3.40.630.30">
    <property type="match status" value="1"/>
</dbReference>
<dbReference type="HAMAP" id="MF_01698">
    <property type="entry name" value="MshD"/>
    <property type="match status" value="1"/>
</dbReference>
<dbReference type="InterPro" id="IPR016181">
    <property type="entry name" value="Acyl_CoA_acyltransferase"/>
</dbReference>
<dbReference type="InterPro" id="IPR000182">
    <property type="entry name" value="GNAT_dom"/>
</dbReference>
<dbReference type="InterPro" id="IPR050276">
    <property type="entry name" value="MshD_Acetyltransferase"/>
</dbReference>
<dbReference type="InterPro" id="IPR017813">
    <property type="entry name" value="Mycothiol_AcTrfase"/>
</dbReference>
<dbReference type="NCBIfam" id="TIGR03448">
    <property type="entry name" value="mycothiol_MshD"/>
    <property type="match status" value="1"/>
</dbReference>
<dbReference type="PANTHER" id="PTHR43617">
    <property type="entry name" value="L-AMINO ACID N-ACETYLTRANSFERASE"/>
    <property type="match status" value="1"/>
</dbReference>
<dbReference type="PANTHER" id="PTHR43617:SF31">
    <property type="entry name" value="MYCOTHIOL ACETYLTRANSFERASE"/>
    <property type="match status" value="1"/>
</dbReference>
<dbReference type="Pfam" id="PF00583">
    <property type="entry name" value="Acetyltransf_1"/>
    <property type="match status" value="1"/>
</dbReference>
<dbReference type="SUPFAM" id="SSF55729">
    <property type="entry name" value="Acyl-CoA N-acyltransferases (Nat)"/>
    <property type="match status" value="1"/>
</dbReference>
<dbReference type="PROSITE" id="PS51186">
    <property type="entry name" value="GNAT"/>
    <property type="match status" value="1"/>
</dbReference>